<accession>Q9W422</accession>
<accession>Q8MTV0</accession>
<sequence length="221" mass="25656">MESPSARTLGNSLGDDSGNGNENGNGSGNGNTTMMPHGIYHERQTRHLCGLHALNNLFQGPDMFSKSELDDYCTTLTPRNWLNPHRSWIGWGNYDVNVIMYALQQRNCEAVWFDRRRDPHCLNLSVIFGFILNVPAQMSLGYYIPLPFHMRHWLALRRLNGSYYNLDSKLREPKCLGTEQQFLEFLATQLQMDHELFLVLDEETDCKDKSQQRWLLPQFRD</sequence>
<keyword id="KW-0378">Hydrolase</keyword>
<keyword id="KW-0645">Protease</keyword>
<keyword id="KW-1185">Reference proteome</keyword>
<keyword id="KW-0833">Ubl conjugation pathway</keyword>
<dbReference type="EC" id="3.4.19.12"/>
<dbReference type="EMBL" id="AE014298">
    <property type="protein sequence ID" value="AAF46138.3"/>
    <property type="molecule type" value="Genomic_DNA"/>
</dbReference>
<dbReference type="EMBL" id="AY070825">
    <property type="protein sequence ID" value="AAL48447.2"/>
    <property type="molecule type" value="mRNA"/>
</dbReference>
<dbReference type="RefSeq" id="NP_572303.4">
    <property type="nucleotide sequence ID" value="NM_132075.4"/>
</dbReference>
<dbReference type="SMR" id="Q9W422"/>
<dbReference type="BioGRID" id="58051">
    <property type="interactions" value="1"/>
</dbReference>
<dbReference type="DIP" id="DIP-23119N"/>
<dbReference type="FunCoup" id="Q9W422">
    <property type="interactions" value="196"/>
</dbReference>
<dbReference type="STRING" id="7227.FBpp0070860"/>
<dbReference type="PaxDb" id="7227-FBpp0070860"/>
<dbReference type="DNASU" id="31560"/>
<dbReference type="EnsemblMetazoa" id="FBtr0070895">
    <property type="protein sequence ID" value="FBpp0070860"/>
    <property type="gene ID" value="FBgn0029853"/>
</dbReference>
<dbReference type="GeneID" id="31560"/>
<dbReference type="KEGG" id="dme:Dmel_CG3781"/>
<dbReference type="UCSC" id="CG3781-RA">
    <property type="organism name" value="d. melanogaster"/>
</dbReference>
<dbReference type="AGR" id="FB:FBgn0029853"/>
<dbReference type="CTD" id="31560"/>
<dbReference type="FlyBase" id="FBgn0029853">
    <property type="gene designation" value="Josd"/>
</dbReference>
<dbReference type="VEuPathDB" id="VectorBase:FBgn0029853"/>
<dbReference type="eggNOG" id="KOG2934">
    <property type="taxonomic scope" value="Eukaryota"/>
</dbReference>
<dbReference type="GeneTree" id="ENSGT00390000009228"/>
<dbReference type="HOGENOM" id="CLU_103892_0_0_1"/>
<dbReference type="InParanoid" id="Q9W422"/>
<dbReference type="OMA" id="QRNCEAV"/>
<dbReference type="OrthoDB" id="422700at2759"/>
<dbReference type="PhylomeDB" id="Q9W422"/>
<dbReference type="Reactome" id="R-DME-5689877">
    <property type="pathway name" value="Josephin domain DUBs"/>
</dbReference>
<dbReference type="BioGRID-ORCS" id="31560">
    <property type="hits" value="0 hits in 3 CRISPR screens"/>
</dbReference>
<dbReference type="GenomeRNAi" id="31560"/>
<dbReference type="PRO" id="PR:Q9W422"/>
<dbReference type="Proteomes" id="UP000000803">
    <property type="component" value="Chromosome X"/>
</dbReference>
<dbReference type="Bgee" id="FBgn0029853">
    <property type="expression patterns" value="Expressed in saliva-secreting gland and 62 other cell types or tissues"/>
</dbReference>
<dbReference type="ExpressionAtlas" id="Q9W422">
    <property type="expression patterns" value="baseline and differential"/>
</dbReference>
<dbReference type="GO" id="GO:0004843">
    <property type="term" value="F:cysteine-type deubiquitinase activity"/>
    <property type="evidence" value="ECO:0000250"/>
    <property type="project" value="FlyBase"/>
</dbReference>
<dbReference type="GO" id="GO:0016579">
    <property type="term" value="P:protein deubiquitination"/>
    <property type="evidence" value="ECO:0007669"/>
    <property type="project" value="InterPro"/>
</dbReference>
<dbReference type="GO" id="GO:0006508">
    <property type="term" value="P:proteolysis"/>
    <property type="evidence" value="ECO:0007669"/>
    <property type="project" value="UniProtKB-KW"/>
</dbReference>
<dbReference type="FunFam" id="3.90.70.40:FF:000002">
    <property type="entry name" value="josephin-1 isoform X2"/>
    <property type="match status" value="1"/>
</dbReference>
<dbReference type="Gene3D" id="3.90.70.40">
    <property type="match status" value="1"/>
</dbReference>
<dbReference type="InterPro" id="IPR040053">
    <property type="entry name" value="JOSD1/2"/>
</dbReference>
<dbReference type="InterPro" id="IPR006155">
    <property type="entry name" value="Josephin"/>
</dbReference>
<dbReference type="PANTHER" id="PTHR13291">
    <property type="entry name" value="JOSEPHIN 1, 2"/>
    <property type="match status" value="1"/>
</dbReference>
<dbReference type="PANTHER" id="PTHR13291:SF0">
    <property type="entry name" value="JOSEPHIN-LIKE PROTEIN"/>
    <property type="match status" value="1"/>
</dbReference>
<dbReference type="Pfam" id="PF02099">
    <property type="entry name" value="Josephin"/>
    <property type="match status" value="1"/>
</dbReference>
<dbReference type="SMART" id="SM01246">
    <property type="entry name" value="Josephin"/>
    <property type="match status" value="1"/>
</dbReference>
<dbReference type="PROSITE" id="PS50957">
    <property type="entry name" value="JOSEPHIN"/>
    <property type="match status" value="1"/>
</dbReference>
<reference key="1">
    <citation type="journal article" date="2000" name="Science">
        <title>The genome sequence of Drosophila melanogaster.</title>
        <authorList>
            <person name="Adams M.D."/>
            <person name="Celniker S.E."/>
            <person name="Holt R.A."/>
            <person name="Evans C.A."/>
            <person name="Gocayne J.D."/>
            <person name="Amanatides P.G."/>
            <person name="Scherer S.E."/>
            <person name="Li P.W."/>
            <person name="Hoskins R.A."/>
            <person name="Galle R.F."/>
            <person name="George R.A."/>
            <person name="Lewis S.E."/>
            <person name="Richards S."/>
            <person name="Ashburner M."/>
            <person name="Henderson S.N."/>
            <person name="Sutton G.G."/>
            <person name="Wortman J.R."/>
            <person name="Yandell M.D."/>
            <person name="Zhang Q."/>
            <person name="Chen L.X."/>
            <person name="Brandon R.C."/>
            <person name="Rogers Y.-H.C."/>
            <person name="Blazej R.G."/>
            <person name="Champe M."/>
            <person name="Pfeiffer B.D."/>
            <person name="Wan K.H."/>
            <person name="Doyle C."/>
            <person name="Baxter E.G."/>
            <person name="Helt G."/>
            <person name="Nelson C.R."/>
            <person name="Miklos G.L.G."/>
            <person name="Abril J.F."/>
            <person name="Agbayani A."/>
            <person name="An H.-J."/>
            <person name="Andrews-Pfannkoch C."/>
            <person name="Baldwin D."/>
            <person name="Ballew R.M."/>
            <person name="Basu A."/>
            <person name="Baxendale J."/>
            <person name="Bayraktaroglu L."/>
            <person name="Beasley E.M."/>
            <person name="Beeson K.Y."/>
            <person name="Benos P.V."/>
            <person name="Berman B.P."/>
            <person name="Bhandari D."/>
            <person name="Bolshakov S."/>
            <person name="Borkova D."/>
            <person name="Botchan M.R."/>
            <person name="Bouck J."/>
            <person name="Brokstein P."/>
            <person name="Brottier P."/>
            <person name="Burtis K.C."/>
            <person name="Busam D.A."/>
            <person name="Butler H."/>
            <person name="Cadieu E."/>
            <person name="Center A."/>
            <person name="Chandra I."/>
            <person name="Cherry J.M."/>
            <person name="Cawley S."/>
            <person name="Dahlke C."/>
            <person name="Davenport L.B."/>
            <person name="Davies P."/>
            <person name="de Pablos B."/>
            <person name="Delcher A."/>
            <person name="Deng Z."/>
            <person name="Mays A.D."/>
            <person name="Dew I."/>
            <person name="Dietz S.M."/>
            <person name="Dodson K."/>
            <person name="Doup L.E."/>
            <person name="Downes M."/>
            <person name="Dugan-Rocha S."/>
            <person name="Dunkov B.C."/>
            <person name="Dunn P."/>
            <person name="Durbin K.J."/>
            <person name="Evangelista C.C."/>
            <person name="Ferraz C."/>
            <person name="Ferriera S."/>
            <person name="Fleischmann W."/>
            <person name="Fosler C."/>
            <person name="Gabrielian A.E."/>
            <person name="Garg N.S."/>
            <person name="Gelbart W.M."/>
            <person name="Glasser K."/>
            <person name="Glodek A."/>
            <person name="Gong F."/>
            <person name="Gorrell J.H."/>
            <person name="Gu Z."/>
            <person name="Guan P."/>
            <person name="Harris M."/>
            <person name="Harris N.L."/>
            <person name="Harvey D.A."/>
            <person name="Heiman T.J."/>
            <person name="Hernandez J.R."/>
            <person name="Houck J."/>
            <person name="Hostin D."/>
            <person name="Houston K.A."/>
            <person name="Howland T.J."/>
            <person name="Wei M.-H."/>
            <person name="Ibegwam C."/>
            <person name="Jalali M."/>
            <person name="Kalush F."/>
            <person name="Karpen G.H."/>
            <person name="Ke Z."/>
            <person name="Kennison J.A."/>
            <person name="Ketchum K.A."/>
            <person name="Kimmel B.E."/>
            <person name="Kodira C.D."/>
            <person name="Kraft C.L."/>
            <person name="Kravitz S."/>
            <person name="Kulp D."/>
            <person name="Lai Z."/>
            <person name="Lasko P."/>
            <person name="Lei Y."/>
            <person name="Levitsky A.A."/>
            <person name="Li J.H."/>
            <person name="Li Z."/>
            <person name="Liang Y."/>
            <person name="Lin X."/>
            <person name="Liu X."/>
            <person name="Mattei B."/>
            <person name="McIntosh T.C."/>
            <person name="McLeod M.P."/>
            <person name="McPherson D."/>
            <person name="Merkulov G."/>
            <person name="Milshina N.V."/>
            <person name="Mobarry C."/>
            <person name="Morris J."/>
            <person name="Moshrefi A."/>
            <person name="Mount S.M."/>
            <person name="Moy M."/>
            <person name="Murphy B."/>
            <person name="Murphy L."/>
            <person name="Muzny D.M."/>
            <person name="Nelson D.L."/>
            <person name="Nelson D.R."/>
            <person name="Nelson K.A."/>
            <person name="Nixon K."/>
            <person name="Nusskern D.R."/>
            <person name="Pacleb J.M."/>
            <person name="Palazzolo M."/>
            <person name="Pittman G.S."/>
            <person name="Pan S."/>
            <person name="Pollard J."/>
            <person name="Puri V."/>
            <person name="Reese M.G."/>
            <person name="Reinert K."/>
            <person name="Remington K."/>
            <person name="Saunders R.D.C."/>
            <person name="Scheeler F."/>
            <person name="Shen H."/>
            <person name="Shue B.C."/>
            <person name="Siden-Kiamos I."/>
            <person name="Simpson M."/>
            <person name="Skupski M.P."/>
            <person name="Smith T.J."/>
            <person name="Spier E."/>
            <person name="Spradling A.C."/>
            <person name="Stapleton M."/>
            <person name="Strong R."/>
            <person name="Sun E."/>
            <person name="Svirskas R."/>
            <person name="Tector C."/>
            <person name="Turner R."/>
            <person name="Venter E."/>
            <person name="Wang A.H."/>
            <person name="Wang X."/>
            <person name="Wang Z.-Y."/>
            <person name="Wassarman D.A."/>
            <person name="Weinstock G.M."/>
            <person name="Weissenbach J."/>
            <person name="Williams S.M."/>
            <person name="Woodage T."/>
            <person name="Worley K.C."/>
            <person name="Wu D."/>
            <person name="Yang S."/>
            <person name="Yao Q.A."/>
            <person name="Ye J."/>
            <person name="Yeh R.-F."/>
            <person name="Zaveri J.S."/>
            <person name="Zhan M."/>
            <person name="Zhang G."/>
            <person name="Zhao Q."/>
            <person name="Zheng L."/>
            <person name="Zheng X.H."/>
            <person name="Zhong F.N."/>
            <person name="Zhong W."/>
            <person name="Zhou X."/>
            <person name="Zhu S.C."/>
            <person name="Zhu X."/>
            <person name="Smith H.O."/>
            <person name="Gibbs R.A."/>
            <person name="Myers E.W."/>
            <person name="Rubin G.M."/>
            <person name="Venter J.C."/>
        </authorList>
    </citation>
    <scope>NUCLEOTIDE SEQUENCE [LARGE SCALE GENOMIC DNA]</scope>
    <source>
        <strain>Berkeley</strain>
    </source>
</reference>
<reference key="2">
    <citation type="journal article" date="2002" name="Genome Biol.">
        <title>Annotation of the Drosophila melanogaster euchromatic genome: a systematic review.</title>
        <authorList>
            <person name="Misra S."/>
            <person name="Crosby M.A."/>
            <person name="Mungall C.J."/>
            <person name="Matthews B.B."/>
            <person name="Campbell K.S."/>
            <person name="Hradecky P."/>
            <person name="Huang Y."/>
            <person name="Kaminker J.S."/>
            <person name="Millburn G.H."/>
            <person name="Prochnik S.E."/>
            <person name="Smith C.D."/>
            <person name="Tupy J.L."/>
            <person name="Whitfield E.J."/>
            <person name="Bayraktaroglu L."/>
            <person name="Berman B.P."/>
            <person name="Bettencourt B.R."/>
            <person name="Celniker S.E."/>
            <person name="de Grey A.D.N.J."/>
            <person name="Drysdale R.A."/>
            <person name="Harris N.L."/>
            <person name="Richter J."/>
            <person name="Russo S."/>
            <person name="Schroeder A.J."/>
            <person name="Shu S.Q."/>
            <person name="Stapleton M."/>
            <person name="Yamada C."/>
            <person name="Ashburner M."/>
            <person name="Gelbart W.M."/>
            <person name="Rubin G.M."/>
            <person name="Lewis S.E."/>
        </authorList>
    </citation>
    <scope>GENOME REANNOTATION</scope>
    <source>
        <strain>Berkeley</strain>
    </source>
</reference>
<reference key="3">
    <citation type="journal article" date="2002" name="Genome Biol.">
        <title>A Drosophila full-length cDNA resource.</title>
        <authorList>
            <person name="Stapleton M."/>
            <person name="Carlson J.W."/>
            <person name="Brokstein P."/>
            <person name="Yu C."/>
            <person name="Champe M."/>
            <person name="George R.A."/>
            <person name="Guarin H."/>
            <person name="Kronmiller B."/>
            <person name="Pacleb J.M."/>
            <person name="Park S."/>
            <person name="Wan K.H."/>
            <person name="Rubin G.M."/>
            <person name="Celniker S.E."/>
        </authorList>
    </citation>
    <scope>NUCLEOTIDE SEQUENCE [LARGE SCALE MRNA] OF 28-221</scope>
    <source>
        <strain>Berkeley</strain>
        <tissue>Testis</tissue>
    </source>
</reference>
<reference key="4">
    <citation type="journal article" date="2003" name="Proteins">
        <title>Structural modeling of ataxin-3 reveals distant homology to adaptins.</title>
        <authorList>
            <person name="Albrecht M."/>
            <person name="Hoffmann D."/>
            <person name="Evert B.O."/>
            <person name="Schmitt I."/>
            <person name="Wuellner U."/>
            <person name="Lengauer T."/>
        </authorList>
    </citation>
    <scope>3D-STRUCTURE MODELING</scope>
</reference>
<gene>
    <name evidence="5" type="primary">Josd</name>
    <name evidence="5" type="ORF">CG3781</name>
</gene>
<feature type="chain" id="PRO_0000053845" description="Josephin-like protein">
    <location>
        <begin position="1"/>
        <end position="221"/>
    </location>
</feature>
<feature type="domain" description="Josephin" evidence="2">
    <location>
        <begin position="36"/>
        <end position="214"/>
    </location>
</feature>
<feature type="region of interest" description="Disordered" evidence="3">
    <location>
        <begin position="1"/>
        <end position="37"/>
    </location>
</feature>
<feature type="compositionally biased region" description="Low complexity" evidence="3">
    <location>
        <begin position="9"/>
        <end position="20"/>
    </location>
</feature>
<feature type="active site" description="Nucleophile" evidence="2">
    <location>
        <position position="49"/>
    </location>
</feature>
<feature type="active site" description="Proton acceptor" evidence="2">
    <location>
        <position position="152"/>
    </location>
</feature>
<feature type="sequence conflict" description="In Ref. 3; AAL48447." evidence="4" ref="3">
    <original>R</original>
    <variation>L</variation>
    <location>
        <position position="43"/>
    </location>
</feature>
<proteinExistence type="evidence at transcript level"/>
<comment type="function">
    <text evidence="1">May act as a deubiquitinating enzyme.</text>
</comment>
<comment type="catalytic activity">
    <reaction>
        <text>Thiol-dependent hydrolysis of ester, thioester, amide, peptide and isopeptide bonds formed by the C-terminal Gly of ubiquitin (a 76-residue protein attached to proteins as an intracellular targeting signal).</text>
        <dbReference type="EC" id="3.4.19.12"/>
    </reaction>
</comment>
<evidence type="ECO:0000250" key="1"/>
<evidence type="ECO:0000255" key="2">
    <source>
        <dbReference type="PROSITE-ProRule" id="PRU00331"/>
    </source>
</evidence>
<evidence type="ECO:0000256" key="3">
    <source>
        <dbReference type="SAM" id="MobiDB-lite"/>
    </source>
</evidence>
<evidence type="ECO:0000305" key="4"/>
<evidence type="ECO:0000312" key="5">
    <source>
        <dbReference type="FlyBase" id="FBgn0029853"/>
    </source>
</evidence>
<organism>
    <name type="scientific">Drosophila melanogaster</name>
    <name type="common">Fruit fly</name>
    <dbReference type="NCBI Taxonomy" id="7227"/>
    <lineage>
        <taxon>Eukaryota</taxon>
        <taxon>Metazoa</taxon>
        <taxon>Ecdysozoa</taxon>
        <taxon>Arthropoda</taxon>
        <taxon>Hexapoda</taxon>
        <taxon>Insecta</taxon>
        <taxon>Pterygota</taxon>
        <taxon>Neoptera</taxon>
        <taxon>Endopterygota</taxon>
        <taxon>Diptera</taxon>
        <taxon>Brachycera</taxon>
        <taxon>Muscomorpha</taxon>
        <taxon>Ephydroidea</taxon>
        <taxon>Drosophilidae</taxon>
        <taxon>Drosophila</taxon>
        <taxon>Sophophora</taxon>
    </lineage>
</organism>
<name>JOSL_DROME</name>
<protein>
    <recommendedName>
        <fullName>Josephin-like protein</fullName>
        <ecNumber>3.4.19.12</ecNumber>
    </recommendedName>
</protein>